<dbReference type="EC" id="2.7.10.-"/>
<dbReference type="EMBL" id="U00096">
    <property type="protein sequence ID" value="AAC74066.1"/>
    <property type="molecule type" value="Genomic_DNA"/>
</dbReference>
<dbReference type="EMBL" id="AP009048">
    <property type="protein sequence ID" value="BAA35746.1"/>
    <property type="molecule type" value="Genomic_DNA"/>
</dbReference>
<dbReference type="EMBL" id="M58708">
    <property type="status" value="NOT_ANNOTATED_CDS"/>
    <property type="molecule type" value="Genomic_DNA"/>
</dbReference>
<dbReference type="PIR" id="C64839">
    <property type="entry name" value="C64839"/>
</dbReference>
<dbReference type="RefSeq" id="NP_415501.1">
    <property type="nucleotide sequence ID" value="NC_000913.3"/>
</dbReference>
<dbReference type="RefSeq" id="WP_000208650.1">
    <property type="nucleotide sequence ID" value="NZ_SSZK01000002.1"/>
</dbReference>
<dbReference type="PDB" id="3CIO">
    <property type="method" value="X-ray"/>
    <property type="resolution" value="2.50 A"/>
    <property type="chains" value="A/D=452-726"/>
</dbReference>
<dbReference type="PDBsum" id="3CIO"/>
<dbReference type="SMR" id="P38134"/>
<dbReference type="BioGRID" id="4261406">
    <property type="interactions" value="393"/>
</dbReference>
<dbReference type="DIP" id="DIP-9526N"/>
<dbReference type="FunCoup" id="P38134">
    <property type="interactions" value="674"/>
</dbReference>
<dbReference type="IntAct" id="P38134">
    <property type="interactions" value="2"/>
</dbReference>
<dbReference type="MINT" id="P38134"/>
<dbReference type="STRING" id="511145.b0981"/>
<dbReference type="TCDB" id="8.A.3.3.1">
    <property type="family name" value="the cytoplasmic membrane-periplasmic auxiliary-1 (mpa1) protein with cytoplasmic (c) domain (mpa1-c or mpa1+c) family"/>
</dbReference>
<dbReference type="jPOST" id="P38134"/>
<dbReference type="PaxDb" id="511145-b0981"/>
<dbReference type="EnsemblBacteria" id="AAC74066">
    <property type="protein sequence ID" value="AAC74066"/>
    <property type="gene ID" value="b0981"/>
</dbReference>
<dbReference type="GeneID" id="93776431"/>
<dbReference type="GeneID" id="947409"/>
<dbReference type="KEGG" id="ecj:JW0964"/>
<dbReference type="KEGG" id="eco:b0981"/>
<dbReference type="KEGG" id="ecoc:C3026_05985"/>
<dbReference type="PATRIC" id="fig|1411691.4.peg.1292"/>
<dbReference type="EchoBASE" id="EB1773"/>
<dbReference type="eggNOG" id="COG0489">
    <property type="taxonomic scope" value="Bacteria"/>
</dbReference>
<dbReference type="eggNOG" id="COG3206">
    <property type="taxonomic scope" value="Bacteria"/>
</dbReference>
<dbReference type="HOGENOM" id="CLU_009912_0_0_6"/>
<dbReference type="InParanoid" id="P38134"/>
<dbReference type="OMA" id="QGQDKEH"/>
<dbReference type="OrthoDB" id="9775724at2"/>
<dbReference type="PhylomeDB" id="P38134"/>
<dbReference type="BioCyc" id="EcoCyc:EG11826-MONOMER"/>
<dbReference type="BioCyc" id="MetaCyc:EG11826-MONOMER"/>
<dbReference type="BRENDA" id="2.7.10.1">
    <property type="organism ID" value="2026"/>
</dbReference>
<dbReference type="EvolutionaryTrace" id="P38134"/>
<dbReference type="PRO" id="PR:P38134"/>
<dbReference type="Proteomes" id="UP000000625">
    <property type="component" value="Chromosome"/>
</dbReference>
<dbReference type="GO" id="GO:0016020">
    <property type="term" value="C:membrane"/>
    <property type="evidence" value="ECO:0000314"/>
    <property type="project" value="EcoCyc"/>
</dbReference>
<dbReference type="GO" id="GO:0005886">
    <property type="term" value="C:plasma membrane"/>
    <property type="evidence" value="ECO:0000314"/>
    <property type="project" value="EcoCyc"/>
</dbReference>
<dbReference type="GO" id="GO:0005524">
    <property type="term" value="F:ATP binding"/>
    <property type="evidence" value="ECO:0007669"/>
    <property type="project" value="UniProtKB-KW"/>
</dbReference>
<dbReference type="GO" id="GO:0042802">
    <property type="term" value="F:identical protein binding"/>
    <property type="evidence" value="ECO:0000353"/>
    <property type="project" value="IntAct"/>
</dbReference>
<dbReference type="GO" id="GO:0004713">
    <property type="term" value="F:protein tyrosine kinase activity"/>
    <property type="evidence" value="ECO:0000314"/>
    <property type="project" value="EcoCyc"/>
</dbReference>
<dbReference type="CDD" id="cd05387">
    <property type="entry name" value="BY-kinase"/>
    <property type="match status" value="1"/>
</dbReference>
<dbReference type="FunFam" id="3.40.50.300:FF:000527">
    <property type="entry name" value="Tyrosine-protein kinase etk"/>
    <property type="match status" value="1"/>
</dbReference>
<dbReference type="Gene3D" id="3.40.50.300">
    <property type="entry name" value="P-loop containing nucleotide triphosphate hydrolases"/>
    <property type="match status" value="1"/>
</dbReference>
<dbReference type="InterPro" id="IPR025669">
    <property type="entry name" value="AAA_dom"/>
</dbReference>
<dbReference type="InterPro" id="IPR050445">
    <property type="entry name" value="Bact_polysacc_biosynth/exp"/>
</dbReference>
<dbReference type="InterPro" id="IPR032807">
    <property type="entry name" value="GNVR"/>
</dbReference>
<dbReference type="InterPro" id="IPR003856">
    <property type="entry name" value="LPS_length_determ_N_term"/>
</dbReference>
<dbReference type="InterPro" id="IPR027417">
    <property type="entry name" value="P-loop_NTPase"/>
</dbReference>
<dbReference type="InterPro" id="IPR005702">
    <property type="entry name" value="Wzc-like_C"/>
</dbReference>
<dbReference type="NCBIfam" id="TIGR01007">
    <property type="entry name" value="eps_fam"/>
    <property type="match status" value="1"/>
</dbReference>
<dbReference type="NCBIfam" id="NF007350">
    <property type="entry name" value="PRK09841.1"/>
    <property type="match status" value="1"/>
</dbReference>
<dbReference type="PANTHER" id="PTHR32309">
    <property type="entry name" value="TYROSINE-PROTEIN KINASE"/>
    <property type="match status" value="1"/>
</dbReference>
<dbReference type="PANTHER" id="PTHR32309:SF32">
    <property type="entry name" value="TYROSINE-PROTEIN KINASE ETK-RELATED"/>
    <property type="match status" value="1"/>
</dbReference>
<dbReference type="Pfam" id="PF13614">
    <property type="entry name" value="AAA_31"/>
    <property type="match status" value="1"/>
</dbReference>
<dbReference type="Pfam" id="PF13807">
    <property type="entry name" value="GNVR"/>
    <property type="match status" value="1"/>
</dbReference>
<dbReference type="Pfam" id="PF23607">
    <property type="entry name" value="WZC_N"/>
    <property type="match status" value="1"/>
</dbReference>
<dbReference type="Pfam" id="PF02706">
    <property type="entry name" value="Wzz"/>
    <property type="match status" value="1"/>
</dbReference>
<dbReference type="SUPFAM" id="SSF52540">
    <property type="entry name" value="P-loop containing nucleoside triphosphate hydrolases"/>
    <property type="match status" value="1"/>
</dbReference>
<organism>
    <name type="scientific">Escherichia coli (strain K12)</name>
    <dbReference type="NCBI Taxonomy" id="83333"/>
    <lineage>
        <taxon>Bacteria</taxon>
        <taxon>Pseudomonadati</taxon>
        <taxon>Pseudomonadota</taxon>
        <taxon>Gammaproteobacteria</taxon>
        <taxon>Enterobacterales</taxon>
        <taxon>Enterobacteriaceae</taxon>
        <taxon>Escherichia</taxon>
    </lineage>
</organism>
<sequence length="726" mass="81242">MTTKNMNTPPGSTQENEIDLLRLVGELWDHRKFIISVTALFTLIAVAYSLLSTPIYQADTLVQVEQKQGNAILSGLSDMIPNSSPESAPEIQLLQSRMILGKTIAELNLRDIVEQKYFPIVGRGWARLTKEKPGELAISWMHIPQLNGQDQQLTLTVGENGHYTLEGEEFTVNGMVGQRLEKDGVALTIADIKAKPGTQFVLSQRTELEAINALQETFTVSERSKESGMLELTMTGDDPQLITRILNSIANNYLQQNIARQAAQDSQSLEFLQRQLPEVRSELDQAEEKLNVYRQQRDSVDLNLEAKAVLEQIVNVDNQLNELTFREAEISQLYKKDHPTYRALLEKRQTLEQERKRLNKRVSAMPSTQQEVLRLSRDVEAGRAVYLQLLNRQQELSISKSSAIGNVRIIDPAVTQPQPVKPKKALNVVLGFILGLFISVGAVLARAMLRRGVEAPEQLEEHGISVYATIPMSEWLDKRTRLRKKNLFSNQQRHRTKNIPFLAVDNPADSAVEAVRALRTSLHFAMMETENNILMITGATPDSGKTFVSSTLAAVIAQSDQKVLFIDADLRRGYSHNLFTVSNEHGLSEYLAGKDELNKVIQHFGKGGFDVITRGQVPPNPSELLMRDRMRQLLEWANDHYDLVIVDTPPMLAVSDAAVVGRSVGTSLLVARFGLNTAKEVSLSMQRLEQAGVNIKGAILNGVIKRASTAYSYGYNYYGYSYSEKE</sequence>
<protein>
    <recommendedName>
        <fullName>Tyrosine-protein kinase etk</fullName>
        <ecNumber>2.7.10.-</ecNumber>
    </recommendedName>
</protein>
<comment type="catalytic activity">
    <reaction>
        <text>L-tyrosyl-[protein] + ATP = O-phospho-L-tyrosyl-[protein] + ADP + H(+)</text>
        <dbReference type="Rhea" id="RHEA:10596"/>
        <dbReference type="Rhea" id="RHEA-COMP:10136"/>
        <dbReference type="Rhea" id="RHEA-COMP:20101"/>
        <dbReference type="ChEBI" id="CHEBI:15378"/>
        <dbReference type="ChEBI" id="CHEBI:30616"/>
        <dbReference type="ChEBI" id="CHEBI:46858"/>
        <dbReference type="ChEBI" id="CHEBI:61978"/>
        <dbReference type="ChEBI" id="CHEBI:456216"/>
    </reaction>
</comment>
<comment type="interaction">
    <interactant intactId="EBI-562015">
        <id>P38134</id>
    </interactant>
    <interactant intactId="EBI-562015">
        <id>P38134</id>
        <label>etk</label>
    </interactant>
    <organismsDiffer>false</organismsDiffer>
    <experiments>4</experiments>
</comment>
<comment type="subcellular location">
    <subcellularLocation>
        <location>Cell inner membrane</location>
        <topology>Multi-pass membrane protein</topology>
    </subcellularLocation>
    <text>When the protein is overexpressed.</text>
</comment>
<comment type="PTM">
    <text>Autophosphorylated. Dephosphorylated by etp.</text>
</comment>
<comment type="similarity">
    <text evidence="2">Belongs to the etk/wzc family.</text>
</comment>
<comment type="caution">
    <text evidence="2">Seems to be expressed only in enteropathogenic E.coli strains; in E.coli K12 / MG1655 and K12 / W3110 this operon is silenced by an IS1D insertion in the promoter region.</text>
</comment>
<keyword id="KW-0002">3D-structure</keyword>
<keyword id="KW-0067">ATP-binding</keyword>
<keyword id="KW-0997">Cell inner membrane</keyword>
<keyword id="KW-1003">Cell membrane</keyword>
<keyword id="KW-0418">Kinase</keyword>
<keyword id="KW-0472">Membrane</keyword>
<keyword id="KW-0547">Nucleotide-binding</keyword>
<keyword id="KW-0597">Phosphoprotein</keyword>
<keyword id="KW-1185">Reference proteome</keyword>
<keyword id="KW-0808">Transferase</keyword>
<keyword id="KW-0812">Transmembrane</keyword>
<keyword id="KW-1133">Transmembrane helix</keyword>
<keyword id="KW-0829">Tyrosine-protein kinase</keyword>
<reference key="1">
    <citation type="journal article" date="1996" name="DNA Res.">
        <title>A 718-kb DNA sequence of the Escherichia coli K-12 genome corresponding to the 12.7-28.0 min region on the linkage map.</title>
        <authorList>
            <person name="Oshima T."/>
            <person name="Aiba H."/>
            <person name="Baba T."/>
            <person name="Fujita K."/>
            <person name="Hayashi K."/>
            <person name="Honjo A."/>
            <person name="Ikemoto K."/>
            <person name="Inada T."/>
            <person name="Itoh T."/>
            <person name="Kajihara M."/>
            <person name="Kanai K."/>
            <person name="Kashimoto K."/>
            <person name="Kimura S."/>
            <person name="Kitagawa M."/>
            <person name="Makino K."/>
            <person name="Masuda S."/>
            <person name="Miki T."/>
            <person name="Mizobuchi K."/>
            <person name="Mori H."/>
            <person name="Motomura K."/>
            <person name="Nakamura Y."/>
            <person name="Nashimoto H."/>
            <person name="Nishio Y."/>
            <person name="Saito N."/>
            <person name="Sampei G."/>
            <person name="Seki Y."/>
            <person name="Tagami H."/>
            <person name="Takemoto K."/>
            <person name="Wada C."/>
            <person name="Yamamoto Y."/>
            <person name="Yano M."/>
            <person name="Horiuchi T."/>
        </authorList>
    </citation>
    <scope>NUCLEOTIDE SEQUENCE [LARGE SCALE GENOMIC DNA]</scope>
    <source>
        <strain>K12 / W3110 / ATCC 27325 / DSM 5911</strain>
    </source>
</reference>
<reference key="2">
    <citation type="journal article" date="1997" name="Science">
        <title>The complete genome sequence of Escherichia coli K-12.</title>
        <authorList>
            <person name="Blattner F.R."/>
            <person name="Plunkett G. III"/>
            <person name="Bloch C.A."/>
            <person name="Perna N.T."/>
            <person name="Burland V."/>
            <person name="Riley M."/>
            <person name="Collado-Vides J."/>
            <person name="Glasner J.D."/>
            <person name="Rode C.K."/>
            <person name="Mayhew G.F."/>
            <person name="Gregor J."/>
            <person name="Davis N.W."/>
            <person name="Kirkpatrick H.A."/>
            <person name="Goeden M.A."/>
            <person name="Rose D.J."/>
            <person name="Mau B."/>
            <person name="Shao Y."/>
        </authorList>
    </citation>
    <scope>NUCLEOTIDE SEQUENCE [LARGE SCALE GENOMIC DNA]</scope>
    <source>
        <strain>K12 / MG1655 / ATCC 47076</strain>
    </source>
</reference>
<reference key="3">
    <citation type="journal article" date="2006" name="Mol. Syst. Biol.">
        <title>Highly accurate genome sequences of Escherichia coli K-12 strains MG1655 and W3110.</title>
        <authorList>
            <person name="Hayashi K."/>
            <person name="Morooka N."/>
            <person name="Yamamoto Y."/>
            <person name="Fujita K."/>
            <person name="Isono K."/>
            <person name="Choi S."/>
            <person name="Ohtsubo E."/>
            <person name="Baba T."/>
            <person name="Wanner B.L."/>
            <person name="Mori H."/>
            <person name="Horiuchi T."/>
        </authorList>
    </citation>
    <scope>NUCLEOTIDE SEQUENCE [LARGE SCALE GENOMIC DNA]</scope>
    <source>
        <strain>K12 / W3110 / ATCC 27325 / DSM 5911</strain>
    </source>
</reference>
<reference key="4">
    <citation type="journal article" date="1990" name="J. Bacteriol.">
        <title>The complete nucleotide sequence of the Escherichia coli gene appA reveals significant homology between pH 2.5 acid phosphatase and glucose-1-phosphatase.</title>
        <authorList>
            <person name="Dassa J."/>
            <person name="Marck C."/>
            <person name="Boquet P.L."/>
        </authorList>
    </citation>
    <scope>NUCLEOTIDE SEQUENCE [GENOMIC DNA] OF 628-726</scope>
</reference>
<reference key="5">
    <citation type="journal article" date="1994" name="Nucleic Acids Res.">
        <title>Intrinsic and extrinsic approaches for detecting genes in a bacterial genome.</title>
        <authorList>
            <person name="Borodovsky M."/>
            <person name="Rudd K.E."/>
            <person name="Koonin E.V."/>
        </authorList>
    </citation>
    <scope>IDENTIFICATION</scope>
</reference>
<reference key="6">
    <citation type="journal article" date="2000" name="J. Mol. Biol.">
        <title>Relationship between exopolysaccharide production and protein-tyrosine phosphorylation in Gram-negative bacteria.</title>
        <authorList>
            <person name="Vincent C."/>
            <person name="Duclos B."/>
            <person name="Grangeasse C."/>
            <person name="Vaganay E."/>
            <person name="Riberty M."/>
            <person name="Cozzone A.J."/>
            <person name="Doublet P."/>
        </authorList>
    </citation>
    <scope>CHARACTERIZATION</scope>
    <source>
        <strain>K12 / JM109 / ATCC 53323</strain>
    </source>
</reference>
<reference key="7">
    <citation type="journal article" date="2005" name="Science">
        <title>Global topology analysis of the Escherichia coli inner membrane proteome.</title>
        <authorList>
            <person name="Daley D.O."/>
            <person name="Rapp M."/>
            <person name="Granseth E."/>
            <person name="Melen K."/>
            <person name="Drew D."/>
            <person name="von Heijne G."/>
        </authorList>
    </citation>
    <scope>TOPOLOGY [LARGE SCALE ANALYSIS]</scope>
    <source>
        <strain>K12 / MG1655 / ATCC 47076</strain>
    </source>
</reference>
<name>ETK_ECOLI</name>
<proteinExistence type="evidence at protein level"/>
<evidence type="ECO:0000255" key="1"/>
<evidence type="ECO:0000305" key="2"/>
<evidence type="ECO:0007829" key="3">
    <source>
        <dbReference type="PDB" id="3CIO"/>
    </source>
</evidence>
<accession>P38134</accession>
<accession>P75879</accession>
<feature type="chain" id="PRO_0000212349" description="Tyrosine-protein kinase etk">
    <location>
        <begin position="1"/>
        <end position="726"/>
    </location>
</feature>
<feature type="topological domain" description="Cytoplasmic" evidence="1">
    <location>
        <begin position="1"/>
        <end position="32"/>
    </location>
</feature>
<feature type="transmembrane region" description="Helical" evidence="1">
    <location>
        <begin position="33"/>
        <end position="53"/>
    </location>
</feature>
<feature type="topological domain" description="Periplasmic" evidence="1">
    <location>
        <begin position="54"/>
        <end position="424"/>
    </location>
</feature>
<feature type="transmembrane region" description="Helical" evidence="1">
    <location>
        <begin position="425"/>
        <end position="445"/>
    </location>
</feature>
<feature type="topological domain" description="Cytoplasmic" evidence="1">
    <location>
        <begin position="446"/>
        <end position="726"/>
    </location>
</feature>
<feature type="sequence conflict" description="In Ref. 1." evidence="2" ref="1">
    <original>E</original>
    <variation>EEN</variation>
    <location>
        <position position="726"/>
    </location>
</feature>
<feature type="helix" evidence="3">
    <location>
        <begin position="457"/>
        <end position="460"/>
    </location>
</feature>
<feature type="turn" evidence="3">
    <location>
        <begin position="461"/>
        <end position="463"/>
    </location>
</feature>
<feature type="strand" evidence="3">
    <location>
        <begin position="466"/>
        <end position="471"/>
    </location>
</feature>
<feature type="helix" evidence="3">
    <location>
        <begin position="475"/>
        <end position="478"/>
    </location>
</feature>
<feature type="helix" evidence="3">
    <location>
        <begin position="502"/>
        <end position="505"/>
    </location>
</feature>
<feature type="helix" evidence="3">
    <location>
        <begin position="510"/>
        <end position="525"/>
    </location>
</feature>
<feature type="strand" evidence="3">
    <location>
        <begin position="533"/>
        <end position="543"/>
    </location>
</feature>
<feature type="helix" evidence="3">
    <location>
        <begin position="545"/>
        <end position="558"/>
    </location>
</feature>
<feature type="strand" evidence="3">
    <location>
        <begin position="563"/>
        <end position="567"/>
    </location>
</feature>
<feature type="turn" evidence="3">
    <location>
        <begin position="570"/>
        <end position="572"/>
    </location>
</feature>
<feature type="helix" evidence="3">
    <location>
        <begin position="575"/>
        <end position="578"/>
    </location>
</feature>
<feature type="strand" evidence="3">
    <location>
        <begin position="584"/>
        <end position="586"/>
    </location>
</feature>
<feature type="helix" evidence="3">
    <location>
        <begin position="587"/>
        <end position="591"/>
    </location>
</feature>
<feature type="helix" evidence="3">
    <location>
        <begin position="597"/>
        <end position="600"/>
    </location>
</feature>
<feature type="strand" evidence="3">
    <location>
        <begin position="602"/>
        <end position="604"/>
    </location>
</feature>
<feature type="turn" evidence="3">
    <location>
        <begin position="605"/>
        <end position="608"/>
    </location>
</feature>
<feature type="strand" evidence="3">
    <location>
        <begin position="609"/>
        <end position="612"/>
    </location>
</feature>
<feature type="helix" evidence="3">
    <location>
        <begin position="621"/>
        <end position="625"/>
    </location>
</feature>
<feature type="helix" evidence="3">
    <location>
        <begin position="628"/>
        <end position="640"/>
    </location>
</feature>
<feature type="strand" evidence="3">
    <location>
        <begin position="642"/>
        <end position="647"/>
    </location>
</feature>
<feature type="turn" evidence="3">
    <location>
        <begin position="651"/>
        <end position="653"/>
    </location>
</feature>
<feature type="helix" evidence="3">
    <location>
        <begin position="656"/>
        <end position="660"/>
    </location>
</feature>
<feature type="helix" evidence="3">
    <location>
        <begin position="661"/>
        <end position="663"/>
    </location>
</feature>
<feature type="strand" evidence="3">
    <location>
        <begin position="665"/>
        <end position="672"/>
    </location>
</feature>
<feature type="turn" evidence="3">
    <location>
        <begin position="673"/>
        <end position="675"/>
    </location>
</feature>
<feature type="helix" evidence="3">
    <location>
        <begin position="680"/>
        <end position="690"/>
    </location>
</feature>
<feature type="strand" evidence="3">
    <location>
        <begin position="698"/>
        <end position="702"/>
    </location>
</feature>
<gene>
    <name type="primary">etk</name>
    <name type="synonym">yccC</name>
    <name type="ordered locus">b0981</name>
    <name type="ordered locus">JW0964</name>
</gene>